<proteinExistence type="inferred from homology"/>
<gene>
    <name evidence="1" type="primary">miaB</name>
    <name type="ordered locus">PPA1017</name>
</gene>
<comment type="function">
    <text evidence="1">Catalyzes the methylthiolation of N6-(dimethylallyl)adenosine (i(6)A), leading to the formation of 2-methylthio-N6-(dimethylallyl)adenosine (ms(2)i(6)A) at position 37 in tRNAs that read codons beginning with uridine.</text>
</comment>
<comment type="catalytic activity">
    <reaction evidence="1">
        <text>N(6)-dimethylallyladenosine(37) in tRNA + (sulfur carrier)-SH + AH2 + 2 S-adenosyl-L-methionine = 2-methylsulfanyl-N(6)-dimethylallyladenosine(37) in tRNA + (sulfur carrier)-H + 5'-deoxyadenosine + L-methionine + A + S-adenosyl-L-homocysteine + 2 H(+)</text>
        <dbReference type="Rhea" id="RHEA:37067"/>
        <dbReference type="Rhea" id="RHEA-COMP:10375"/>
        <dbReference type="Rhea" id="RHEA-COMP:10376"/>
        <dbReference type="Rhea" id="RHEA-COMP:14737"/>
        <dbReference type="Rhea" id="RHEA-COMP:14739"/>
        <dbReference type="ChEBI" id="CHEBI:13193"/>
        <dbReference type="ChEBI" id="CHEBI:15378"/>
        <dbReference type="ChEBI" id="CHEBI:17319"/>
        <dbReference type="ChEBI" id="CHEBI:17499"/>
        <dbReference type="ChEBI" id="CHEBI:29917"/>
        <dbReference type="ChEBI" id="CHEBI:57844"/>
        <dbReference type="ChEBI" id="CHEBI:57856"/>
        <dbReference type="ChEBI" id="CHEBI:59789"/>
        <dbReference type="ChEBI" id="CHEBI:64428"/>
        <dbReference type="ChEBI" id="CHEBI:74415"/>
        <dbReference type="ChEBI" id="CHEBI:74417"/>
        <dbReference type="EC" id="2.8.4.3"/>
    </reaction>
</comment>
<comment type="cofactor">
    <cofactor evidence="1">
        <name>[4Fe-4S] cluster</name>
        <dbReference type="ChEBI" id="CHEBI:49883"/>
    </cofactor>
    <text evidence="1">Binds 2 [4Fe-4S] clusters. One cluster is coordinated with 3 cysteines and an exchangeable S-adenosyl-L-methionine.</text>
</comment>
<comment type="subunit">
    <text evidence="1">Monomer.</text>
</comment>
<comment type="subcellular location">
    <subcellularLocation>
        <location evidence="1">Cytoplasm</location>
    </subcellularLocation>
</comment>
<comment type="similarity">
    <text evidence="1">Belongs to the methylthiotransferase family. MiaB subfamily.</text>
</comment>
<organism>
    <name type="scientific">Cutibacterium acnes (strain DSM 16379 / KPA171202)</name>
    <name type="common">Propionibacterium acnes</name>
    <dbReference type="NCBI Taxonomy" id="267747"/>
    <lineage>
        <taxon>Bacteria</taxon>
        <taxon>Bacillati</taxon>
        <taxon>Actinomycetota</taxon>
        <taxon>Actinomycetes</taxon>
        <taxon>Propionibacteriales</taxon>
        <taxon>Propionibacteriaceae</taxon>
        <taxon>Cutibacterium</taxon>
    </lineage>
</organism>
<reference key="1">
    <citation type="journal article" date="2004" name="Science">
        <title>The complete genome sequence of Propionibacterium acnes, a commensal of human skin.</title>
        <authorList>
            <person name="Brueggemann H."/>
            <person name="Henne A."/>
            <person name="Hoster F."/>
            <person name="Liesegang H."/>
            <person name="Wiezer A."/>
            <person name="Strittmatter A."/>
            <person name="Hujer S."/>
            <person name="Duerre P."/>
            <person name="Gottschalk G."/>
        </authorList>
    </citation>
    <scope>NUCLEOTIDE SEQUENCE [LARGE SCALE GENOMIC DNA]</scope>
    <source>
        <strain>DSM 16379 / KPA171202</strain>
    </source>
</reference>
<dbReference type="EC" id="2.8.4.3" evidence="1"/>
<dbReference type="EMBL" id="AE017283">
    <property type="protein sequence ID" value="AAT82769.1"/>
    <property type="molecule type" value="Genomic_DNA"/>
</dbReference>
<dbReference type="RefSeq" id="WP_002525630.1">
    <property type="nucleotide sequence ID" value="NZ_CP025935.1"/>
</dbReference>
<dbReference type="SMR" id="Q6A8Z7"/>
<dbReference type="EnsemblBacteria" id="AAT82769">
    <property type="protein sequence ID" value="AAT82769"/>
    <property type="gene ID" value="PPA1017"/>
</dbReference>
<dbReference type="KEGG" id="pac:PPA1017"/>
<dbReference type="PATRIC" id="fig|267747.3.peg.1053"/>
<dbReference type="eggNOG" id="COG0621">
    <property type="taxonomic scope" value="Bacteria"/>
</dbReference>
<dbReference type="HOGENOM" id="CLU_018697_2_2_11"/>
<dbReference type="Proteomes" id="UP000000603">
    <property type="component" value="Chromosome"/>
</dbReference>
<dbReference type="GO" id="GO:0005829">
    <property type="term" value="C:cytosol"/>
    <property type="evidence" value="ECO:0007669"/>
    <property type="project" value="TreeGrafter"/>
</dbReference>
<dbReference type="GO" id="GO:0051539">
    <property type="term" value="F:4 iron, 4 sulfur cluster binding"/>
    <property type="evidence" value="ECO:0007669"/>
    <property type="project" value="UniProtKB-UniRule"/>
</dbReference>
<dbReference type="GO" id="GO:0046872">
    <property type="term" value="F:metal ion binding"/>
    <property type="evidence" value="ECO:0007669"/>
    <property type="project" value="UniProtKB-KW"/>
</dbReference>
<dbReference type="GO" id="GO:0035597">
    <property type="term" value="F:N6-isopentenyladenosine methylthiotransferase activity"/>
    <property type="evidence" value="ECO:0007669"/>
    <property type="project" value="TreeGrafter"/>
</dbReference>
<dbReference type="CDD" id="cd01335">
    <property type="entry name" value="Radical_SAM"/>
    <property type="match status" value="1"/>
</dbReference>
<dbReference type="FunFam" id="3.40.50.12160:FF:000003">
    <property type="entry name" value="CDK5 regulatory subunit-associated protein 1"/>
    <property type="match status" value="1"/>
</dbReference>
<dbReference type="FunFam" id="3.80.30.20:FF:000001">
    <property type="entry name" value="tRNA-2-methylthio-N(6)-dimethylallyladenosine synthase 2"/>
    <property type="match status" value="1"/>
</dbReference>
<dbReference type="Gene3D" id="3.40.50.12160">
    <property type="entry name" value="Methylthiotransferase, N-terminal domain"/>
    <property type="match status" value="1"/>
</dbReference>
<dbReference type="Gene3D" id="3.80.30.20">
    <property type="entry name" value="tm_1862 like domain"/>
    <property type="match status" value="1"/>
</dbReference>
<dbReference type="HAMAP" id="MF_01864">
    <property type="entry name" value="tRNA_metthiotr_MiaB"/>
    <property type="match status" value="1"/>
</dbReference>
<dbReference type="InterPro" id="IPR006638">
    <property type="entry name" value="Elp3/MiaA/NifB-like_rSAM"/>
</dbReference>
<dbReference type="InterPro" id="IPR005839">
    <property type="entry name" value="Methylthiotransferase"/>
</dbReference>
<dbReference type="InterPro" id="IPR020612">
    <property type="entry name" value="Methylthiotransferase_CS"/>
</dbReference>
<dbReference type="InterPro" id="IPR013848">
    <property type="entry name" value="Methylthiotransferase_N"/>
</dbReference>
<dbReference type="InterPro" id="IPR038135">
    <property type="entry name" value="Methylthiotransferase_N_sf"/>
</dbReference>
<dbReference type="InterPro" id="IPR006463">
    <property type="entry name" value="MiaB_methiolase"/>
</dbReference>
<dbReference type="InterPro" id="IPR007197">
    <property type="entry name" value="rSAM"/>
</dbReference>
<dbReference type="InterPro" id="IPR023404">
    <property type="entry name" value="rSAM_horseshoe"/>
</dbReference>
<dbReference type="NCBIfam" id="TIGR01574">
    <property type="entry name" value="miaB-methiolase"/>
    <property type="match status" value="1"/>
</dbReference>
<dbReference type="NCBIfam" id="TIGR00089">
    <property type="entry name" value="MiaB/RimO family radical SAM methylthiotransferase"/>
    <property type="match status" value="1"/>
</dbReference>
<dbReference type="PANTHER" id="PTHR43020">
    <property type="entry name" value="CDK5 REGULATORY SUBUNIT-ASSOCIATED PROTEIN 1"/>
    <property type="match status" value="1"/>
</dbReference>
<dbReference type="PANTHER" id="PTHR43020:SF2">
    <property type="entry name" value="MITOCHONDRIAL TRNA METHYLTHIOTRANSFERASE CDK5RAP1"/>
    <property type="match status" value="1"/>
</dbReference>
<dbReference type="Pfam" id="PF04055">
    <property type="entry name" value="Radical_SAM"/>
    <property type="match status" value="1"/>
</dbReference>
<dbReference type="Pfam" id="PF00919">
    <property type="entry name" value="UPF0004"/>
    <property type="match status" value="1"/>
</dbReference>
<dbReference type="SFLD" id="SFLDF00273">
    <property type="entry name" value="(dimethylallyl)adenosine_tRNA"/>
    <property type="match status" value="1"/>
</dbReference>
<dbReference type="SFLD" id="SFLDG01082">
    <property type="entry name" value="B12-binding_domain_containing"/>
    <property type="match status" value="1"/>
</dbReference>
<dbReference type="SFLD" id="SFLDG01061">
    <property type="entry name" value="methylthiotransferase"/>
    <property type="match status" value="1"/>
</dbReference>
<dbReference type="SMART" id="SM00729">
    <property type="entry name" value="Elp3"/>
    <property type="match status" value="1"/>
</dbReference>
<dbReference type="SUPFAM" id="SSF102114">
    <property type="entry name" value="Radical SAM enzymes"/>
    <property type="match status" value="1"/>
</dbReference>
<dbReference type="PROSITE" id="PS51449">
    <property type="entry name" value="MTTASE_N"/>
    <property type="match status" value="1"/>
</dbReference>
<dbReference type="PROSITE" id="PS01278">
    <property type="entry name" value="MTTASE_RADICAL"/>
    <property type="match status" value="1"/>
</dbReference>
<dbReference type="PROSITE" id="PS51918">
    <property type="entry name" value="RADICAL_SAM"/>
    <property type="match status" value="1"/>
</dbReference>
<evidence type="ECO:0000255" key="1">
    <source>
        <dbReference type="HAMAP-Rule" id="MF_01864"/>
    </source>
</evidence>
<evidence type="ECO:0000255" key="2">
    <source>
        <dbReference type="PROSITE-ProRule" id="PRU01266"/>
    </source>
</evidence>
<keyword id="KW-0004">4Fe-4S</keyword>
<keyword id="KW-0963">Cytoplasm</keyword>
<keyword id="KW-0408">Iron</keyword>
<keyword id="KW-0411">Iron-sulfur</keyword>
<keyword id="KW-0479">Metal-binding</keyword>
<keyword id="KW-0949">S-adenosyl-L-methionine</keyword>
<keyword id="KW-0808">Transferase</keyword>
<keyword id="KW-0819">tRNA processing</keyword>
<sequence>MPNNTLQHTEAPTYRVVTYGCQMNVHDSERIAGLLEEAGYVPDPRTDTLAPADVVVFNTCAVRENADNRLYGTLGHMAAVKSAHPGMQLAVGGCMAQKDKDTVVARAPWVDVVFGTHNVGSLPVLLKRARHNATAQVEIEESLVTFPSNLPARRDSAYSAWVSISVGCNNTCTFCIVPQLRGKETDRRPGEILSEIRALVNEGVQEITLLGQNVNSYGVQFGDRGAFAKLLRACGNIDGLERVRFTSPHPAAFTDDVIEAMAETPNVMPSLHMPLQSGSDEVLRRMRRSYRSTKFLGILDRVREAIPHAAITTDIIVGFPGETDKDFAETMRIVEESRFSAAFTFQYSIRPNTPAGVMKDQVPKPVVQERYEQLVELVDDIAWQENKAQVGRAVEVMFAQGEGRKDEATHRVTGRARDNRLVHVSLNPGDDVPRPGDIGEVVITSGHPHHLVADGGLVNLRRTRGGDAWHARQGQVSQGTPTVLGLPTVGVPRH</sequence>
<accession>Q6A8Z7</accession>
<name>MIAB_CUTAK</name>
<feature type="chain" id="PRO_0000374455" description="tRNA-2-methylthio-N(6)-dimethylallyladenosine synthase">
    <location>
        <begin position="1"/>
        <end position="494"/>
    </location>
</feature>
<feature type="domain" description="MTTase N-terminal" evidence="1">
    <location>
        <begin position="12"/>
        <end position="131"/>
    </location>
</feature>
<feature type="domain" description="Radical SAM core" evidence="2">
    <location>
        <begin position="154"/>
        <end position="385"/>
    </location>
</feature>
<feature type="domain" description="TRAM" evidence="1">
    <location>
        <begin position="387"/>
        <end position="457"/>
    </location>
</feature>
<feature type="binding site" evidence="1">
    <location>
        <position position="21"/>
    </location>
    <ligand>
        <name>[4Fe-4S] cluster</name>
        <dbReference type="ChEBI" id="CHEBI:49883"/>
        <label>1</label>
    </ligand>
</feature>
<feature type="binding site" evidence="1">
    <location>
        <position position="60"/>
    </location>
    <ligand>
        <name>[4Fe-4S] cluster</name>
        <dbReference type="ChEBI" id="CHEBI:49883"/>
        <label>1</label>
    </ligand>
</feature>
<feature type="binding site" evidence="1">
    <location>
        <position position="94"/>
    </location>
    <ligand>
        <name>[4Fe-4S] cluster</name>
        <dbReference type="ChEBI" id="CHEBI:49883"/>
        <label>1</label>
    </ligand>
</feature>
<feature type="binding site" evidence="1">
    <location>
        <position position="168"/>
    </location>
    <ligand>
        <name>[4Fe-4S] cluster</name>
        <dbReference type="ChEBI" id="CHEBI:49883"/>
        <label>2</label>
        <note>4Fe-4S-S-AdoMet</note>
    </ligand>
</feature>
<feature type="binding site" evidence="1">
    <location>
        <position position="172"/>
    </location>
    <ligand>
        <name>[4Fe-4S] cluster</name>
        <dbReference type="ChEBI" id="CHEBI:49883"/>
        <label>2</label>
        <note>4Fe-4S-S-AdoMet</note>
    </ligand>
</feature>
<feature type="binding site" evidence="1">
    <location>
        <position position="175"/>
    </location>
    <ligand>
        <name>[4Fe-4S] cluster</name>
        <dbReference type="ChEBI" id="CHEBI:49883"/>
        <label>2</label>
        <note>4Fe-4S-S-AdoMet</note>
    </ligand>
</feature>
<protein>
    <recommendedName>
        <fullName evidence="1">tRNA-2-methylthio-N(6)-dimethylallyladenosine synthase</fullName>
        <ecNumber evidence="1">2.8.4.3</ecNumber>
    </recommendedName>
    <alternativeName>
        <fullName evidence="1">(Dimethylallyl)adenosine tRNA methylthiotransferase MiaB</fullName>
    </alternativeName>
    <alternativeName>
        <fullName evidence="1">tRNA-i(6)A37 methylthiotransferase</fullName>
    </alternativeName>
</protein>